<keyword id="KW-0687">Ribonucleoprotein</keyword>
<keyword id="KW-0689">Ribosomal protein</keyword>
<keyword id="KW-0694">RNA-binding</keyword>
<keyword id="KW-0699">rRNA-binding</keyword>
<gene>
    <name evidence="1" type="primary">rpsC</name>
    <name evidence="1" type="synonym">rps3</name>
    <name type="ordered locus">A9601_17591</name>
</gene>
<proteinExistence type="inferred from homology"/>
<reference key="1">
    <citation type="journal article" date="2007" name="PLoS Genet.">
        <title>Patterns and implications of gene gain and loss in the evolution of Prochlorococcus.</title>
        <authorList>
            <person name="Kettler G.C."/>
            <person name="Martiny A.C."/>
            <person name="Huang K."/>
            <person name="Zucker J."/>
            <person name="Coleman M.L."/>
            <person name="Rodrigue S."/>
            <person name="Chen F."/>
            <person name="Lapidus A."/>
            <person name="Ferriera S."/>
            <person name="Johnson J."/>
            <person name="Steglich C."/>
            <person name="Church G.M."/>
            <person name="Richardson P."/>
            <person name="Chisholm S.W."/>
        </authorList>
    </citation>
    <scope>NUCLEOTIDE SEQUENCE [LARGE SCALE GENOMIC DNA]</scope>
    <source>
        <strain>AS9601</strain>
    </source>
</reference>
<accession>A2BTD1</accession>
<comment type="function">
    <text evidence="1">Binds the lower part of the 30S subunit head. Binds mRNA in the 70S ribosome, positioning it for translation.</text>
</comment>
<comment type="subunit">
    <text evidence="1">Part of the 30S ribosomal subunit. Forms a tight complex with proteins S10 and S14.</text>
</comment>
<comment type="similarity">
    <text evidence="1">Belongs to the universal ribosomal protein uS3 family.</text>
</comment>
<sequence length="243" mass="27451">MGHKIHPSGLRLGITQEHRSKWFATSKTYPILLQEDFKIRTFIQKKYGAAGISDVLIARKADQLELELKTARPGVIVGRQGSGIEELRSGIQKTIGDRTRQVRINVVEVERVDADAFLLAEYIAQQLEKRVAFRRTIRMALQRAQRAGVLGLKIQVGGRLNGAEIARTEWTREGRVPLHTLRAEIDYATREANTTYGVLGIKVWVFKGEVLPKEEQTIPVGASPKRKASRRPQQFEDRSNENS</sequence>
<name>RS3_PROMS</name>
<protein>
    <recommendedName>
        <fullName evidence="1">Small ribosomal subunit protein uS3</fullName>
    </recommendedName>
    <alternativeName>
        <fullName evidence="3">30S ribosomal protein S3</fullName>
    </alternativeName>
</protein>
<organism>
    <name type="scientific">Prochlorococcus marinus (strain AS9601)</name>
    <dbReference type="NCBI Taxonomy" id="146891"/>
    <lineage>
        <taxon>Bacteria</taxon>
        <taxon>Bacillati</taxon>
        <taxon>Cyanobacteriota</taxon>
        <taxon>Cyanophyceae</taxon>
        <taxon>Synechococcales</taxon>
        <taxon>Prochlorococcaceae</taxon>
        <taxon>Prochlorococcus</taxon>
    </lineage>
</organism>
<dbReference type="EMBL" id="CP000551">
    <property type="protein sequence ID" value="ABM71042.1"/>
    <property type="molecule type" value="Genomic_DNA"/>
</dbReference>
<dbReference type="RefSeq" id="WP_011819165.1">
    <property type="nucleotide sequence ID" value="NC_008816.1"/>
</dbReference>
<dbReference type="SMR" id="A2BTD1"/>
<dbReference type="STRING" id="146891.A9601_17591"/>
<dbReference type="KEGG" id="pmb:A9601_17591"/>
<dbReference type="eggNOG" id="COG0092">
    <property type="taxonomic scope" value="Bacteria"/>
</dbReference>
<dbReference type="HOGENOM" id="CLU_058591_0_2_3"/>
<dbReference type="OrthoDB" id="9806396at2"/>
<dbReference type="Proteomes" id="UP000002590">
    <property type="component" value="Chromosome"/>
</dbReference>
<dbReference type="GO" id="GO:0022627">
    <property type="term" value="C:cytosolic small ribosomal subunit"/>
    <property type="evidence" value="ECO:0007669"/>
    <property type="project" value="TreeGrafter"/>
</dbReference>
<dbReference type="GO" id="GO:0003729">
    <property type="term" value="F:mRNA binding"/>
    <property type="evidence" value="ECO:0007669"/>
    <property type="project" value="UniProtKB-UniRule"/>
</dbReference>
<dbReference type="GO" id="GO:0019843">
    <property type="term" value="F:rRNA binding"/>
    <property type="evidence" value="ECO:0007669"/>
    <property type="project" value="UniProtKB-UniRule"/>
</dbReference>
<dbReference type="GO" id="GO:0003735">
    <property type="term" value="F:structural constituent of ribosome"/>
    <property type="evidence" value="ECO:0007669"/>
    <property type="project" value="InterPro"/>
</dbReference>
<dbReference type="GO" id="GO:0006412">
    <property type="term" value="P:translation"/>
    <property type="evidence" value="ECO:0007669"/>
    <property type="project" value="UniProtKB-UniRule"/>
</dbReference>
<dbReference type="CDD" id="cd02412">
    <property type="entry name" value="KH-II_30S_S3"/>
    <property type="match status" value="1"/>
</dbReference>
<dbReference type="FunFam" id="3.30.300.20:FF:000001">
    <property type="entry name" value="30S ribosomal protein S3"/>
    <property type="match status" value="1"/>
</dbReference>
<dbReference type="Gene3D" id="3.30.300.20">
    <property type="match status" value="1"/>
</dbReference>
<dbReference type="Gene3D" id="3.30.1140.32">
    <property type="entry name" value="Ribosomal protein S3, C-terminal domain"/>
    <property type="match status" value="1"/>
</dbReference>
<dbReference type="HAMAP" id="MF_01309_B">
    <property type="entry name" value="Ribosomal_uS3_B"/>
    <property type="match status" value="1"/>
</dbReference>
<dbReference type="InterPro" id="IPR004087">
    <property type="entry name" value="KH_dom"/>
</dbReference>
<dbReference type="InterPro" id="IPR015946">
    <property type="entry name" value="KH_dom-like_a/b"/>
</dbReference>
<dbReference type="InterPro" id="IPR004044">
    <property type="entry name" value="KH_dom_type_2"/>
</dbReference>
<dbReference type="InterPro" id="IPR009019">
    <property type="entry name" value="KH_sf_prok-type"/>
</dbReference>
<dbReference type="InterPro" id="IPR036419">
    <property type="entry name" value="Ribosomal_S3_C_sf"/>
</dbReference>
<dbReference type="InterPro" id="IPR005704">
    <property type="entry name" value="Ribosomal_uS3_bac-typ"/>
</dbReference>
<dbReference type="InterPro" id="IPR001351">
    <property type="entry name" value="Ribosomal_uS3_C"/>
</dbReference>
<dbReference type="InterPro" id="IPR018280">
    <property type="entry name" value="Ribosomal_uS3_CS"/>
</dbReference>
<dbReference type="NCBIfam" id="TIGR01009">
    <property type="entry name" value="rpsC_bact"/>
    <property type="match status" value="1"/>
</dbReference>
<dbReference type="PANTHER" id="PTHR11760">
    <property type="entry name" value="30S/40S RIBOSOMAL PROTEIN S3"/>
    <property type="match status" value="1"/>
</dbReference>
<dbReference type="PANTHER" id="PTHR11760:SF19">
    <property type="entry name" value="SMALL RIBOSOMAL SUBUNIT PROTEIN US3C"/>
    <property type="match status" value="1"/>
</dbReference>
<dbReference type="Pfam" id="PF07650">
    <property type="entry name" value="KH_2"/>
    <property type="match status" value="1"/>
</dbReference>
<dbReference type="Pfam" id="PF00189">
    <property type="entry name" value="Ribosomal_S3_C"/>
    <property type="match status" value="1"/>
</dbReference>
<dbReference type="SMART" id="SM00322">
    <property type="entry name" value="KH"/>
    <property type="match status" value="1"/>
</dbReference>
<dbReference type="SUPFAM" id="SSF54814">
    <property type="entry name" value="Prokaryotic type KH domain (KH-domain type II)"/>
    <property type="match status" value="1"/>
</dbReference>
<dbReference type="SUPFAM" id="SSF54821">
    <property type="entry name" value="Ribosomal protein S3 C-terminal domain"/>
    <property type="match status" value="1"/>
</dbReference>
<dbReference type="PROSITE" id="PS50823">
    <property type="entry name" value="KH_TYPE_2"/>
    <property type="match status" value="1"/>
</dbReference>
<dbReference type="PROSITE" id="PS00548">
    <property type="entry name" value="RIBOSOMAL_S3"/>
    <property type="match status" value="1"/>
</dbReference>
<feature type="chain" id="PRO_0000293850" description="Small ribosomal subunit protein uS3">
    <location>
        <begin position="1"/>
        <end position="243"/>
    </location>
</feature>
<feature type="domain" description="KH type-2" evidence="1">
    <location>
        <begin position="39"/>
        <end position="110"/>
    </location>
</feature>
<feature type="region of interest" description="Disordered" evidence="2">
    <location>
        <begin position="216"/>
        <end position="243"/>
    </location>
</feature>
<feature type="compositionally biased region" description="Basic and acidic residues" evidence="2">
    <location>
        <begin position="233"/>
        <end position="243"/>
    </location>
</feature>
<evidence type="ECO:0000255" key="1">
    <source>
        <dbReference type="HAMAP-Rule" id="MF_01309"/>
    </source>
</evidence>
<evidence type="ECO:0000256" key="2">
    <source>
        <dbReference type="SAM" id="MobiDB-lite"/>
    </source>
</evidence>
<evidence type="ECO:0000305" key="3"/>